<sequence>MIEFEKPIITKIDENKDYGRFVIEPLERGYGTTLGNSLRRVLLSSLPGAAVTSIKIDGVLHEFDTIPGVREDVMQIILNVKGLAVKSYVEDEKIIELEVEGPAEVTAGDILTDSDIELVNPDHYLFTIAEGHSLRATMTVAKKRGYVPAEGNKKDDAPVGTLAVDSIYTPVKKVNYQVEPARVGSNDGFDKLTIEIMTNGTIIPEDALGLSARVLIEHLNLFTDLTEVAKATEVMKETEKVNDEKVLDRTIEELDLSVRSYNCLKRAGINTVFDLTEKSEPEMMKVRNLGRKSLEEVKVKLADLGLGLKNDK</sequence>
<comment type="function">
    <text evidence="1">DNA-dependent RNA polymerase catalyzes the transcription of DNA into RNA using the four ribonucleoside triphosphates as substrates.</text>
</comment>
<comment type="catalytic activity">
    <reaction evidence="1">
        <text>RNA(n) + a ribonucleoside 5'-triphosphate = RNA(n+1) + diphosphate</text>
        <dbReference type="Rhea" id="RHEA:21248"/>
        <dbReference type="Rhea" id="RHEA-COMP:14527"/>
        <dbReference type="Rhea" id="RHEA-COMP:17342"/>
        <dbReference type="ChEBI" id="CHEBI:33019"/>
        <dbReference type="ChEBI" id="CHEBI:61557"/>
        <dbReference type="ChEBI" id="CHEBI:140395"/>
        <dbReference type="EC" id="2.7.7.6"/>
    </reaction>
</comment>
<comment type="subunit">
    <text evidence="1">Homodimer. The RNAP catalytic core consists of 2 alpha, 1 beta, 1 beta' and 1 omega subunit. When a sigma factor is associated with the core the holoenzyme is formed, which can initiate transcription.</text>
</comment>
<comment type="domain">
    <text evidence="1">The N-terminal domain is essential for RNAP assembly and basal transcription, whereas the C-terminal domain is involved in interaction with transcriptional regulators and with upstream promoter elements.</text>
</comment>
<comment type="similarity">
    <text evidence="1">Belongs to the RNA polymerase alpha chain family.</text>
</comment>
<dbReference type="EC" id="2.7.7.6" evidence="1"/>
<dbReference type="EMBL" id="CP000261">
    <property type="protein sequence ID" value="ABF35125.1"/>
    <property type="molecule type" value="Genomic_DNA"/>
</dbReference>
<dbReference type="SMR" id="Q1JE33"/>
<dbReference type="KEGG" id="spj:MGAS2096_Spy0073"/>
<dbReference type="HOGENOM" id="CLU_053084_0_1_9"/>
<dbReference type="GO" id="GO:0005737">
    <property type="term" value="C:cytoplasm"/>
    <property type="evidence" value="ECO:0007669"/>
    <property type="project" value="UniProtKB-ARBA"/>
</dbReference>
<dbReference type="GO" id="GO:0000428">
    <property type="term" value="C:DNA-directed RNA polymerase complex"/>
    <property type="evidence" value="ECO:0007669"/>
    <property type="project" value="UniProtKB-KW"/>
</dbReference>
<dbReference type="GO" id="GO:0003677">
    <property type="term" value="F:DNA binding"/>
    <property type="evidence" value="ECO:0007669"/>
    <property type="project" value="UniProtKB-UniRule"/>
</dbReference>
<dbReference type="GO" id="GO:0003899">
    <property type="term" value="F:DNA-directed RNA polymerase activity"/>
    <property type="evidence" value="ECO:0007669"/>
    <property type="project" value="UniProtKB-UniRule"/>
</dbReference>
<dbReference type="GO" id="GO:0046983">
    <property type="term" value="F:protein dimerization activity"/>
    <property type="evidence" value="ECO:0007669"/>
    <property type="project" value="InterPro"/>
</dbReference>
<dbReference type="GO" id="GO:0006351">
    <property type="term" value="P:DNA-templated transcription"/>
    <property type="evidence" value="ECO:0007669"/>
    <property type="project" value="UniProtKB-UniRule"/>
</dbReference>
<dbReference type="CDD" id="cd06928">
    <property type="entry name" value="RNAP_alpha_NTD"/>
    <property type="match status" value="1"/>
</dbReference>
<dbReference type="FunFam" id="1.10.150.20:FF:000001">
    <property type="entry name" value="DNA-directed RNA polymerase subunit alpha"/>
    <property type="match status" value="1"/>
</dbReference>
<dbReference type="FunFam" id="2.170.120.12:FF:000001">
    <property type="entry name" value="DNA-directed RNA polymerase subunit alpha"/>
    <property type="match status" value="1"/>
</dbReference>
<dbReference type="Gene3D" id="1.10.150.20">
    <property type="entry name" value="5' to 3' exonuclease, C-terminal subdomain"/>
    <property type="match status" value="1"/>
</dbReference>
<dbReference type="Gene3D" id="2.170.120.12">
    <property type="entry name" value="DNA-directed RNA polymerase, insert domain"/>
    <property type="match status" value="1"/>
</dbReference>
<dbReference type="Gene3D" id="3.30.1360.10">
    <property type="entry name" value="RNA polymerase, RBP11-like subunit"/>
    <property type="match status" value="1"/>
</dbReference>
<dbReference type="HAMAP" id="MF_00059">
    <property type="entry name" value="RNApol_bact_RpoA"/>
    <property type="match status" value="1"/>
</dbReference>
<dbReference type="InterPro" id="IPR011262">
    <property type="entry name" value="DNA-dir_RNA_pol_insert"/>
</dbReference>
<dbReference type="InterPro" id="IPR011263">
    <property type="entry name" value="DNA-dir_RNA_pol_RpoA/D/Rpb3"/>
</dbReference>
<dbReference type="InterPro" id="IPR011773">
    <property type="entry name" value="DNA-dir_RpoA"/>
</dbReference>
<dbReference type="InterPro" id="IPR036603">
    <property type="entry name" value="RBP11-like"/>
</dbReference>
<dbReference type="InterPro" id="IPR011260">
    <property type="entry name" value="RNAP_asu_C"/>
</dbReference>
<dbReference type="InterPro" id="IPR036643">
    <property type="entry name" value="RNApol_insert_sf"/>
</dbReference>
<dbReference type="NCBIfam" id="NF003513">
    <property type="entry name" value="PRK05182.1-2"/>
    <property type="match status" value="1"/>
</dbReference>
<dbReference type="NCBIfam" id="NF003515">
    <property type="entry name" value="PRK05182.2-1"/>
    <property type="match status" value="1"/>
</dbReference>
<dbReference type="NCBIfam" id="NF003518">
    <property type="entry name" value="PRK05182.2-4"/>
    <property type="match status" value="1"/>
</dbReference>
<dbReference type="NCBIfam" id="NF003519">
    <property type="entry name" value="PRK05182.2-5"/>
    <property type="match status" value="1"/>
</dbReference>
<dbReference type="NCBIfam" id="TIGR02027">
    <property type="entry name" value="rpoA"/>
    <property type="match status" value="1"/>
</dbReference>
<dbReference type="Pfam" id="PF01000">
    <property type="entry name" value="RNA_pol_A_bac"/>
    <property type="match status" value="1"/>
</dbReference>
<dbReference type="Pfam" id="PF03118">
    <property type="entry name" value="RNA_pol_A_CTD"/>
    <property type="match status" value="1"/>
</dbReference>
<dbReference type="Pfam" id="PF01193">
    <property type="entry name" value="RNA_pol_L"/>
    <property type="match status" value="1"/>
</dbReference>
<dbReference type="SMART" id="SM00662">
    <property type="entry name" value="RPOLD"/>
    <property type="match status" value="1"/>
</dbReference>
<dbReference type="SUPFAM" id="SSF47789">
    <property type="entry name" value="C-terminal domain of RNA polymerase alpha subunit"/>
    <property type="match status" value="1"/>
</dbReference>
<dbReference type="SUPFAM" id="SSF56553">
    <property type="entry name" value="Insert subdomain of RNA polymerase alpha subunit"/>
    <property type="match status" value="1"/>
</dbReference>
<dbReference type="SUPFAM" id="SSF55257">
    <property type="entry name" value="RBP11-like subunits of RNA polymerase"/>
    <property type="match status" value="1"/>
</dbReference>
<accession>Q1JE33</accession>
<organism>
    <name type="scientific">Streptococcus pyogenes serotype M12 (strain MGAS2096)</name>
    <dbReference type="NCBI Taxonomy" id="370553"/>
    <lineage>
        <taxon>Bacteria</taxon>
        <taxon>Bacillati</taxon>
        <taxon>Bacillota</taxon>
        <taxon>Bacilli</taxon>
        <taxon>Lactobacillales</taxon>
        <taxon>Streptococcaceae</taxon>
        <taxon>Streptococcus</taxon>
    </lineage>
</organism>
<feature type="chain" id="PRO_0000264553" description="DNA-directed RNA polymerase subunit alpha">
    <location>
        <begin position="1"/>
        <end position="312"/>
    </location>
</feature>
<feature type="region of interest" description="Alpha N-terminal domain (alpha-NTD)" evidence="1">
    <location>
        <begin position="1"/>
        <end position="226"/>
    </location>
</feature>
<feature type="region of interest" description="Alpha C-terminal domain (alpha-CTD)" evidence="1">
    <location>
        <begin position="242"/>
        <end position="312"/>
    </location>
</feature>
<gene>
    <name evidence="1" type="primary">rpoA</name>
    <name type="ordered locus">MGAS2096_Spy0073</name>
</gene>
<name>RPOA_STRPB</name>
<keyword id="KW-0240">DNA-directed RNA polymerase</keyword>
<keyword id="KW-0548">Nucleotidyltransferase</keyword>
<keyword id="KW-0804">Transcription</keyword>
<keyword id="KW-0808">Transferase</keyword>
<evidence type="ECO:0000255" key="1">
    <source>
        <dbReference type="HAMAP-Rule" id="MF_00059"/>
    </source>
</evidence>
<proteinExistence type="inferred from homology"/>
<reference key="1">
    <citation type="journal article" date="2006" name="Proc. Natl. Acad. Sci. U.S.A.">
        <title>Molecular genetic anatomy of inter- and intraserotype variation in the human bacterial pathogen group A Streptococcus.</title>
        <authorList>
            <person name="Beres S.B."/>
            <person name="Richter E.W."/>
            <person name="Nagiec M.J."/>
            <person name="Sumby P."/>
            <person name="Porcella S.F."/>
            <person name="DeLeo F.R."/>
            <person name="Musser J.M."/>
        </authorList>
    </citation>
    <scope>NUCLEOTIDE SEQUENCE [LARGE SCALE GENOMIC DNA]</scope>
    <source>
        <strain>MGAS2096</strain>
    </source>
</reference>
<protein>
    <recommendedName>
        <fullName evidence="1">DNA-directed RNA polymerase subunit alpha</fullName>
        <shortName evidence="1">RNAP subunit alpha</shortName>
        <ecNumber evidence="1">2.7.7.6</ecNumber>
    </recommendedName>
    <alternativeName>
        <fullName evidence="1">RNA polymerase subunit alpha</fullName>
    </alternativeName>
    <alternativeName>
        <fullName evidence="1">Transcriptase subunit alpha</fullName>
    </alternativeName>
</protein>